<evidence type="ECO:0000255" key="1">
    <source>
        <dbReference type="HAMAP-Rule" id="MF_00079"/>
    </source>
</evidence>
<gene>
    <name evidence="1" type="primary">hisG</name>
    <name type="ordered locus">CGSHiEE_00650</name>
</gene>
<accession>A5UA21</accession>
<sequence length="303" mass="33847">MTNTTMQPNRLRIALQKKGRLSQDCAILLKQCGVKINWNEQRLIAYAENLPIEILRVRDDDIPGLIFDGVVDLGIIGENVLEEEELGRRAANETVTYKKLRQLDFGDCRLSLAVDRDCHYENVKDLANRRIATSYPYLLKRYMNENGVSFKSCLLNGSVEVAPSAGIAYAICDLVSSGATLEANGLKEVDVIYRSKACLIQRAEPLESTKQALVDKLLTRIQGVQQAAESKYIMLHAPKEKLEKITALLPGVENPTILPLASDTTRVAMHVVSQENLFWETMEQLKEAGASSILVLPIEKMME</sequence>
<name>HIS1_HAEIE</name>
<feature type="chain" id="PRO_1000004463" description="ATP phosphoribosyltransferase">
    <location>
        <begin position="1"/>
        <end position="303"/>
    </location>
</feature>
<reference key="1">
    <citation type="journal article" date="2007" name="Genome Biol.">
        <title>Characterization and modeling of the Haemophilus influenzae core and supragenomes based on the complete genomic sequences of Rd and 12 clinical nontypeable strains.</title>
        <authorList>
            <person name="Hogg J.S."/>
            <person name="Hu F.Z."/>
            <person name="Janto B."/>
            <person name="Boissy R."/>
            <person name="Hayes J."/>
            <person name="Keefe R."/>
            <person name="Post J.C."/>
            <person name="Ehrlich G.D."/>
        </authorList>
    </citation>
    <scope>NUCLEOTIDE SEQUENCE [LARGE SCALE GENOMIC DNA]</scope>
    <source>
        <strain>PittEE</strain>
    </source>
</reference>
<proteinExistence type="inferred from homology"/>
<comment type="function">
    <text evidence="1">Catalyzes the condensation of ATP and 5-phosphoribose 1-diphosphate to form N'-(5'-phosphoribosyl)-ATP (PR-ATP). Has a crucial role in the pathway because the rate of histidine biosynthesis seems to be controlled primarily by regulation of HisG enzymatic activity.</text>
</comment>
<comment type="catalytic activity">
    <reaction evidence="1">
        <text>1-(5-phospho-beta-D-ribosyl)-ATP + diphosphate = 5-phospho-alpha-D-ribose 1-diphosphate + ATP</text>
        <dbReference type="Rhea" id="RHEA:18473"/>
        <dbReference type="ChEBI" id="CHEBI:30616"/>
        <dbReference type="ChEBI" id="CHEBI:33019"/>
        <dbReference type="ChEBI" id="CHEBI:58017"/>
        <dbReference type="ChEBI" id="CHEBI:73183"/>
        <dbReference type="EC" id="2.4.2.17"/>
    </reaction>
</comment>
<comment type="cofactor">
    <cofactor evidence="1">
        <name>Mg(2+)</name>
        <dbReference type="ChEBI" id="CHEBI:18420"/>
    </cofactor>
</comment>
<comment type="activity regulation">
    <text evidence="1">Feedback inhibited by histidine.</text>
</comment>
<comment type="pathway">
    <text evidence="1">Amino-acid biosynthesis; L-histidine biosynthesis; L-histidine from 5-phospho-alpha-D-ribose 1-diphosphate: step 1/9.</text>
</comment>
<comment type="subcellular location">
    <subcellularLocation>
        <location evidence="1">Cytoplasm</location>
    </subcellularLocation>
</comment>
<comment type="similarity">
    <text evidence="1">Belongs to the ATP phosphoribosyltransferase family. Long subfamily.</text>
</comment>
<dbReference type="EC" id="2.4.2.17" evidence="1"/>
<dbReference type="EMBL" id="CP000671">
    <property type="protein sequence ID" value="ABQ97622.1"/>
    <property type="molecule type" value="Genomic_DNA"/>
</dbReference>
<dbReference type="SMR" id="A5UA21"/>
<dbReference type="KEGG" id="hip:CGSHiEE_00650"/>
<dbReference type="HOGENOM" id="CLU_038115_1_0_6"/>
<dbReference type="UniPathway" id="UPA00031">
    <property type="reaction ID" value="UER00006"/>
</dbReference>
<dbReference type="GO" id="GO:0005737">
    <property type="term" value="C:cytoplasm"/>
    <property type="evidence" value="ECO:0007669"/>
    <property type="project" value="UniProtKB-SubCell"/>
</dbReference>
<dbReference type="GO" id="GO:0005524">
    <property type="term" value="F:ATP binding"/>
    <property type="evidence" value="ECO:0007669"/>
    <property type="project" value="UniProtKB-KW"/>
</dbReference>
<dbReference type="GO" id="GO:0003879">
    <property type="term" value="F:ATP phosphoribosyltransferase activity"/>
    <property type="evidence" value="ECO:0007669"/>
    <property type="project" value="UniProtKB-UniRule"/>
</dbReference>
<dbReference type="GO" id="GO:0000287">
    <property type="term" value="F:magnesium ion binding"/>
    <property type="evidence" value="ECO:0007669"/>
    <property type="project" value="UniProtKB-UniRule"/>
</dbReference>
<dbReference type="GO" id="GO:0000105">
    <property type="term" value="P:L-histidine biosynthetic process"/>
    <property type="evidence" value="ECO:0007669"/>
    <property type="project" value="UniProtKB-UniRule"/>
</dbReference>
<dbReference type="FunFam" id="3.30.70.120:FF:000002">
    <property type="entry name" value="ATP phosphoribosyltransferase"/>
    <property type="match status" value="1"/>
</dbReference>
<dbReference type="FunFam" id="3.40.190.10:FF:000008">
    <property type="entry name" value="ATP phosphoribosyltransferase"/>
    <property type="match status" value="1"/>
</dbReference>
<dbReference type="Gene3D" id="3.30.70.120">
    <property type="match status" value="1"/>
</dbReference>
<dbReference type="Gene3D" id="3.40.190.10">
    <property type="entry name" value="Periplasmic binding protein-like II"/>
    <property type="match status" value="2"/>
</dbReference>
<dbReference type="HAMAP" id="MF_00079">
    <property type="entry name" value="HisG_Long"/>
    <property type="match status" value="1"/>
</dbReference>
<dbReference type="InterPro" id="IPR020621">
    <property type="entry name" value="ATP-PRT_HisG_long"/>
</dbReference>
<dbReference type="InterPro" id="IPR013820">
    <property type="entry name" value="ATP_PRibTrfase_cat"/>
</dbReference>
<dbReference type="InterPro" id="IPR018198">
    <property type="entry name" value="ATP_PRibTrfase_CS"/>
</dbReference>
<dbReference type="InterPro" id="IPR001348">
    <property type="entry name" value="ATP_PRibTrfase_HisG"/>
</dbReference>
<dbReference type="InterPro" id="IPR013115">
    <property type="entry name" value="HisG_C"/>
</dbReference>
<dbReference type="InterPro" id="IPR011322">
    <property type="entry name" value="N-reg_PII-like_a/b"/>
</dbReference>
<dbReference type="InterPro" id="IPR015867">
    <property type="entry name" value="N-reg_PII/ATP_PRibTrfase_C"/>
</dbReference>
<dbReference type="NCBIfam" id="TIGR00070">
    <property type="entry name" value="hisG"/>
    <property type="match status" value="1"/>
</dbReference>
<dbReference type="NCBIfam" id="TIGR03455">
    <property type="entry name" value="HisG_C-term"/>
    <property type="match status" value="1"/>
</dbReference>
<dbReference type="PANTHER" id="PTHR21403:SF8">
    <property type="entry name" value="ATP PHOSPHORIBOSYLTRANSFERASE"/>
    <property type="match status" value="1"/>
</dbReference>
<dbReference type="PANTHER" id="PTHR21403">
    <property type="entry name" value="ATP PHOSPHORIBOSYLTRANSFERASE ATP-PRTASE"/>
    <property type="match status" value="1"/>
</dbReference>
<dbReference type="Pfam" id="PF01634">
    <property type="entry name" value="HisG"/>
    <property type="match status" value="1"/>
</dbReference>
<dbReference type="Pfam" id="PF08029">
    <property type="entry name" value="HisG_C"/>
    <property type="match status" value="1"/>
</dbReference>
<dbReference type="SUPFAM" id="SSF54913">
    <property type="entry name" value="GlnB-like"/>
    <property type="match status" value="1"/>
</dbReference>
<dbReference type="SUPFAM" id="SSF53850">
    <property type="entry name" value="Periplasmic binding protein-like II"/>
    <property type="match status" value="1"/>
</dbReference>
<dbReference type="PROSITE" id="PS01316">
    <property type="entry name" value="ATP_P_PHORIBOSYLTR"/>
    <property type="match status" value="1"/>
</dbReference>
<protein>
    <recommendedName>
        <fullName evidence="1">ATP phosphoribosyltransferase</fullName>
        <shortName evidence="1">ATP-PRT</shortName>
        <shortName evidence="1">ATP-PRTase</shortName>
        <ecNumber evidence="1">2.4.2.17</ecNumber>
    </recommendedName>
</protein>
<organism>
    <name type="scientific">Haemophilus influenzae (strain PittEE)</name>
    <dbReference type="NCBI Taxonomy" id="374930"/>
    <lineage>
        <taxon>Bacteria</taxon>
        <taxon>Pseudomonadati</taxon>
        <taxon>Pseudomonadota</taxon>
        <taxon>Gammaproteobacteria</taxon>
        <taxon>Pasteurellales</taxon>
        <taxon>Pasteurellaceae</taxon>
        <taxon>Haemophilus</taxon>
    </lineage>
</organism>
<keyword id="KW-0028">Amino-acid biosynthesis</keyword>
<keyword id="KW-0067">ATP-binding</keyword>
<keyword id="KW-0963">Cytoplasm</keyword>
<keyword id="KW-0328">Glycosyltransferase</keyword>
<keyword id="KW-0368">Histidine biosynthesis</keyword>
<keyword id="KW-0460">Magnesium</keyword>
<keyword id="KW-0479">Metal-binding</keyword>
<keyword id="KW-0547">Nucleotide-binding</keyword>
<keyword id="KW-0808">Transferase</keyword>